<sequence>MLDLIQTRRDLHQIPEIGLEEFKTQAYLLDVIEKLTTGKDFVQIRTWRTGILVYLQGSQPERTIGWRTDIDGLPIVEQTGLPFASQHQGRMHACGHDFHMTIALGCLERALEEQPKNNLLFLFQPAEENEAGGMLMYEDDAFGDWLPDQFYGLHVRPDLKVGQIATNTHTLFAGTCEVKIRFKGKGGHAAFPHEANDALVAASYFVTQVQSVVSRNVNPIEGAVVTFGVFQAGTTNNVITDTAFLHGTIRALTQDMSLLVQKRVKTVAEGVAAAFDMEVEVELKQGGYLPVENNPALARELMDFFDEKDGIELIDIEPAMTGEDFGYLLSKVDGVMFWLGIDSPYALHHPQMSPKEEVLAIGVAAVSSFLKKKAAE</sequence>
<dbReference type="EC" id="3.5.1.47" evidence="1"/>
<dbReference type="EMBL" id="AE007317">
    <property type="protein sequence ID" value="AAL00708.1"/>
    <property type="molecule type" value="Genomic_DNA"/>
</dbReference>
<dbReference type="PIR" id="G98109">
    <property type="entry name" value="G98109"/>
</dbReference>
<dbReference type="RefSeq" id="NP_359497.1">
    <property type="nucleotide sequence ID" value="NC_003098.1"/>
</dbReference>
<dbReference type="RefSeq" id="WP_000885102.1">
    <property type="nucleotide sequence ID" value="NC_003098.1"/>
</dbReference>
<dbReference type="SMR" id="Q8DN55"/>
<dbReference type="STRING" id="171101.spr1906"/>
<dbReference type="KEGG" id="spr:spr1906"/>
<dbReference type="PATRIC" id="fig|171101.6.peg.2055"/>
<dbReference type="eggNOG" id="COG1473">
    <property type="taxonomic scope" value="Bacteria"/>
</dbReference>
<dbReference type="HOGENOM" id="CLU_023257_0_1_9"/>
<dbReference type="UniPathway" id="UPA00034">
    <property type="reaction ID" value="UER00024"/>
</dbReference>
<dbReference type="Proteomes" id="UP000000586">
    <property type="component" value="Chromosome"/>
</dbReference>
<dbReference type="GO" id="GO:0050118">
    <property type="term" value="F:N-acetyldiaminopimelate deacetylase activity"/>
    <property type="evidence" value="ECO:0000318"/>
    <property type="project" value="GO_Central"/>
</dbReference>
<dbReference type="GO" id="GO:0019877">
    <property type="term" value="P:diaminopimelate biosynthetic process"/>
    <property type="evidence" value="ECO:0000318"/>
    <property type="project" value="GO_Central"/>
</dbReference>
<dbReference type="GO" id="GO:0009089">
    <property type="term" value="P:lysine biosynthetic process via diaminopimelate"/>
    <property type="evidence" value="ECO:0007669"/>
    <property type="project" value="UniProtKB-UniRule"/>
</dbReference>
<dbReference type="CDD" id="cd05670">
    <property type="entry name" value="M20_Acy1_YkuR-like"/>
    <property type="match status" value="1"/>
</dbReference>
<dbReference type="FunFam" id="3.30.70.360:FF:000001">
    <property type="entry name" value="N-acetyldiaminopimelate deacetylase"/>
    <property type="match status" value="1"/>
</dbReference>
<dbReference type="Gene3D" id="3.30.70.360">
    <property type="match status" value="1"/>
</dbReference>
<dbReference type="Gene3D" id="3.40.630.10">
    <property type="entry name" value="Zn peptidases"/>
    <property type="match status" value="1"/>
</dbReference>
<dbReference type="HAMAP" id="MF_01692">
    <property type="entry name" value="DapEL"/>
    <property type="match status" value="1"/>
</dbReference>
<dbReference type="InterPro" id="IPR023905">
    <property type="entry name" value="AcetylDAP_deacetylase"/>
</dbReference>
<dbReference type="InterPro" id="IPR017439">
    <property type="entry name" value="Amidohydrolase"/>
</dbReference>
<dbReference type="InterPro" id="IPR036264">
    <property type="entry name" value="Bact_exopeptidase_dim_dom"/>
</dbReference>
<dbReference type="InterPro" id="IPR002933">
    <property type="entry name" value="Peptidase_M20"/>
</dbReference>
<dbReference type="InterPro" id="IPR011650">
    <property type="entry name" value="Peptidase_M20_dimer"/>
</dbReference>
<dbReference type="NCBIfam" id="TIGR01891">
    <property type="entry name" value="amidohydrolases"/>
    <property type="match status" value="1"/>
</dbReference>
<dbReference type="PANTHER" id="PTHR11014:SF98">
    <property type="entry name" value="N-ACETYLDIAMINOPIMELATE DEACETYLASE"/>
    <property type="match status" value="1"/>
</dbReference>
<dbReference type="PANTHER" id="PTHR11014">
    <property type="entry name" value="PEPTIDASE M20 FAMILY MEMBER"/>
    <property type="match status" value="1"/>
</dbReference>
<dbReference type="Pfam" id="PF07687">
    <property type="entry name" value="M20_dimer"/>
    <property type="match status" value="1"/>
</dbReference>
<dbReference type="Pfam" id="PF01546">
    <property type="entry name" value="Peptidase_M20"/>
    <property type="match status" value="1"/>
</dbReference>
<dbReference type="PIRSF" id="PIRSF005962">
    <property type="entry name" value="Pept_M20D_amidohydro"/>
    <property type="match status" value="1"/>
</dbReference>
<dbReference type="SUPFAM" id="SSF55031">
    <property type="entry name" value="Bacterial exopeptidase dimerisation domain"/>
    <property type="match status" value="1"/>
</dbReference>
<dbReference type="SUPFAM" id="SSF53187">
    <property type="entry name" value="Zn-dependent exopeptidases"/>
    <property type="match status" value="1"/>
</dbReference>
<organism>
    <name type="scientific">Streptococcus pneumoniae (strain ATCC BAA-255 / R6)</name>
    <dbReference type="NCBI Taxonomy" id="171101"/>
    <lineage>
        <taxon>Bacteria</taxon>
        <taxon>Bacillati</taxon>
        <taxon>Bacillota</taxon>
        <taxon>Bacilli</taxon>
        <taxon>Lactobacillales</taxon>
        <taxon>Streptococcaceae</taxon>
        <taxon>Streptococcus</taxon>
    </lineage>
</organism>
<comment type="function">
    <text evidence="1">Catalyzes the conversion of N-acetyl-diaminopimelate to diaminopimelate and acetate.</text>
</comment>
<comment type="catalytic activity">
    <reaction evidence="1">
        <text>N-acetyl-(2S,6S)-2,6-diaminopimelate + H2O = (2S,6S)-2,6-diaminopimelate + acetate</text>
        <dbReference type="Rhea" id="RHEA:20405"/>
        <dbReference type="ChEBI" id="CHEBI:15377"/>
        <dbReference type="ChEBI" id="CHEBI:30089"/>
        <dbReference type="ChEBI" id="CHEBI:57609"/>
        <dbReference type="ChEBI" id="CHEBI:58767"/>
        <dbReference type="EC" id="3.5.1.47"/>
    </reaction>
</comment>
<comment type="pathway">
    <text evidence="1">Amino-acid biosynthesis; L-lysine biosynthesis via DAP pathway; LL-2,6-diaminopimelate from (S)-tetrahydrodipicolinate (acetylase route): step 3/3.</text>
</comment>
<comment type="similarity">
    <text evidence="1">Belongs to the peptidase M20A family. N-acetyldiaminopimelate deacetylase subfamily.</text>
</comment>
<reference key="1">
    <citation type="journal article" date="2001" name="J. Bacteriol.">
        <title>Genome of the bacterium Streptococcus pneumoniae strain R6.</title>
        <authorList>
            <person name="Hoskins J."/>
            <person name="Alborn W.E. Jr."/>
            <person name="Arnold J."/>
            <person name="Blaszczak L.C."/>
            <person name="Burgett S."/>
            <person name="DeHoff B.S."/>
            <person name="Estrem S.T."/>
            <person name="Fritz L."/>
            <person name="Fu D.-J."/>
            <person name="Fuller W."/>
            <person name="Geringer C."/>
            <person name="Gilmour R."/>
            <person name="Glass J.S."/>
            <person name="Khoja H."/>
            <person name="Kraft A.R."/>
            <person name="Lagace R.E."/>
            <person name="LeBlanc D.J."/>
            <person name="Lee L.N."/>
            <person name="Lefkowitz E.J."/>
            <person name="Lu J."/>
            <person name="Matsushima P."/>
            <person name="McAhren S.M."/>
            <person name="McHenney M."/>
            <person name="McLeaster K."/>
            <person name="Mundy C.W."/>
            <person name="Nicas T.I."/>
            <person name="Norris F.H."/>
            <person name="O'Gara M."/>
            <person name="Peery R.B."/>
            <person name="Robertson G.T."/>
            <person name="Rockey P."/>
            <person name="Sun P.-M."/>
            <person name="Winkler M.E."/>
            <person name="Yang Y."/>
            <person name="Young-Bellido M."/>
            <person name="Zhao G."/>
            <person name="Zook C.A."/>
            <person name="Baltz R.H."/>
            <person name="Jaskunas S.R."/>
            <person name="Rosteck P.R. Jr."/>
            <person name="Skatrud P.L."/>
            <person name="Glass J.I."/>
        </authorList>
    </citation>
    <scope>NUCLEOTIDE SEQUENCE [LARGE SCALE GENOMIC DNA]</scope>
    <source>
        <strain>ATCC BAA-255 / R6</strain>
    </source>
</reference>
<gene>
    <name type="ordered locus">spr1906</name>
</gene>
<name>DAPEL_STRR6</name>
<keyword id="KW-0028">Amino-acid biosynthesis</keyword>
<keyword id="KW-0220">Diaminopimelate biosynthesis</keyword>
<keyword id="KW-0378">Hydrolase</keyword>
<keyword id="KW-0457">Lysine biosynthesis</keyword>
<keyword id="KW-1185">Reference proteome</keyword>
<protein>
    <recommendedName>
        <fullName evidence="1">N-acetyldiaminopimelate deacetylase</fullName>
        <ecNumber evidence="1">3.5.1.47</ecNumber>
    </recommendedName>
</protein>
<feature type="chain" id="PRO_0000376784" description="N-acetyldiaminopimelate deacetylase">
    <location>
        <begin position="1"/>
        <end position="376"/>
    </location>
</feature>
<feature type="active site" evidence="1">
    <location>
        <position position="69"/>
    </location>
</feature>
<feature type="active site" description="Proton acceptor" evidence="1">
    <location>
        <position position="128"/>
    </location>
</feature>
<accession>Q8DN55</accession>
<proteinExistence type="inferred from homology"/>
<evidence type="ECO:0000255" key="1">
    <source>
        <dbReference type="HAMAP-Rule" id="MF_01692"/>
    </source>
</evidence>